<proteinExistence type="inferred from homology"/>
<dbReference type="EC" id="3.4.22.-"/>
<dbReference type="EMBL" id="CH445356">
    <property type="protein sequence ID" value="EAT78153.2"/>
    <property type="status" value="ALT_SEQ"/>
    <property type="molecule type" value="Genomic_DNA"/>
</dbReference>
<dbReference type="RefSeq" id="XP_001804795.1">
    <property type="nucleotide sequence ID" value="XM_001804743.1"/>
</dbReference>
<dbReference type="SMR" id="Q0U199"/>
<dbReference type="FunCoup" id="Q0U199">
    <property type="interactions" value="287"/>
</dbReference>
<dbReference type="STRING" id="321614.Q0U199"/>
<dbReference type="MEROPS" id="C54.001"/>
<dbReference type="GeneID" id="5981720"/>
<dbReference type="KEGG" id="pno:SNOG_14613"/>
<dbReference type="VEuPathDB" id="FungiDB:JI435_146130"/>
<dbReference type="eggNOG" id="KOG2674">
    <property type="taxonomic scope" value="Eukaryota"/>
</dbReference>
<dbReference type="InParanoid" id="Q0U199"/>
<dbReference type="OMA" id="TGFGCMI"/>
<dbReference type="OrthoDB" id="2960936at2759"/>
<dbReference type="Proteomes" id="UP000001055">
    <property type="component" value="Unassembled WGS sequence"/>
</dbReference>
<dbReference type="GO" id="GO:0005737">
    <property type="term" value="C:cytoplasm"/>
    <property type="evidence" value="ECO:0000318"/>
    <property type="project" value="GO_Central"/>
</dbReference>
<dbReference type="GO" id="GO:0005634">
    <property type="term" value="C:nucleus"/>
    <property type="evidence" value="ECO:0007669"/>
    <property type="project" value="UniProtKB-SubCell"/>
</dbReference>
<dbReference type="GO" id="GO:0000407">
    <property type="term" value="C:phagophore assembly site"/>
    <property type="evidence" value="ECO:0007669"/>
    <property type="project" value="UniProtKB-SubCell"/>
</dbReference>
<dbReference type="GO" id="GO:0004197">
    <property type="term" value="F:cysteine-type endopeptidase activity"/>
    <property type="evidence" value="ECO:0000318"/>
    <property type="project" value="GO_Central"/>
</dbReference>
<dbReference type="GO" id="GO:0019786">
    <property type="term" value="F:protein-phosphatidylethanolamide deconjugating activity"/>
    <property type="evidence" value="ECO:0000318"/>
    <property type="project" value="GO_Central"/>
</dbReference>
<dbReference type="GO" id="GO:0035973">
    <property type="term" value="P:aggrephagy"/>
    <property type="evidence" value="ECO:0000318"/>
    <property type="project" value="GO_Central"/>
</dbReference>
<dbReference type="GO" id="GO:0000045">
    <property type="term" value="P:autophagosome assembly"/>
    <property type="evidence" value="ECO:0000318"/>
    <property type="project" value="GO_Central"/>
</dbReference>
<dbReference type="GO" id="GO:0000423">
    <property type="term" value="P:mitophagy"/>
    <property type="evidence" value="ECO:0000318"/>
    <property type="project" value="GO_Central"/>
</dbReference>
<dbReference type="GO" id="GO:0034727">
    <property type="term" value="P:piecemeal microautophagy of the nucleus"/>
    <property type="evidence" value="ECO:0000318"/>
    <property type="project" value="GO_Central"/>
</dbReference>
<dbReference type="GO" id="GO:0016485">
    <property type="term" value="P:protein processing"/>
    <property type="evidence" value="ECO:0000318"/>
    <property type="project" value="GO_Central"/>
</dbReference>
<dbReference type="GO" id="GO:0015031">
    <property type="term" value="P:protein transport"/>
    <property type="evidence" value="ECO:0007669"/>
    <property type="project" value="UniProtKB-KW"/>
</dbReference>
<dbReference type="InterPro" id="IPR038765">
    <property type="entry name" value="Papain-like_cys_pep_sf"/>
</dbReference>
<dbReference type="InterPro" id="IPR005078">
    <property type="entry name" value="Peptidase_C54"/>
</dbReference>
<dbReference type="InterPro" id="IPR046792">
    <property type="entry name" value="Peptidase_C54_cat"/>
</dbReference>
<dbReference type="PANTHER" id="PTHR22624:SF49">
    <property type="entry name" value="CYSTEINE PROTEASE"/>
    <property type="match status" value="1"/>
</dbReference>
<dbReference type="PANTHER" id="PTHR22624">
    <property type="entry name" value="CYSTEINE PROTEASE ATG4"/>
    <property type="match status" value="1"/>
</dbReference>
<dbReference type="Pfam" id="PF03416">
    <property type="entry name" value="Peptidase_C54"/>
    <property type="match status" value="1"/>
</dbReference>
<dbReference type="SUPFAM" id="SSF54001">
    <property type="entry name" value="Cysteine proteinases"/>
    <property type="match status" value="1"/>
</dbReference>
<gene>
    <name type="primary">ATG4</name>
    <name type="ORF">SNOG_14613</name>
</gene>
<organism>
    <name type="scientific">Phaeosphaeria nodorum (strain SN15 / ATCC MYA-4574 / FGSC 10173)</name>
    <name type="common">Glume blotch fungus</name>
    <name type="synonym">Parastagonospora nodorum</name>
    <dbReference type="NCBI Taxonomy" id="321614"/>
    <lineage>
        <taxon>Eukaryota</taxon>
        <taxon>Fungi</taxon>
        <taxon>Dikarya</taxon>
        <taxon>Ascomycota</taxon>
        <taxon>Pezizomycotina</taxon>
        <taxon>Dothideomycetes</taxon>
        <taxon>Pleosporomycetidae</taxon>
        <taxon>Pleosporales</taxon>
        <taxon>Pleosporineae</taxon>
        <taxon>Phaeosphaeriaceae</taxon>
        <taxon>Parastagonospora</taxon>
    </lineage>
</organism>
<reference key="1">
    <citation type="journal article" date="2007" name="Plant Cell">
        <title>Dothideomycete-plant interactions illuminated by genome sequencing and EST analysis of the wheat pathogen Stagonospora nodorum.</title>
        <authorList>
            <person name="Hane J.K."/>
            <person name="Lowe R.G.T."/>
            <person name="Solomon P.S."/>
            <person name="Tan K.-C."/>
            <person name="Schoch C.L."/>
            <person name="Spatafora J.W."/>
            <person name="Crous P.W."/>
            <person name="Kodira C.D."/>
            <person name="Birren B.W."/>
            <person name="Galagan J.E."/>
            <person name="Torriani S.F.F."/>
            <person name="McDonald B.A."/>
            <person name="Oliver R.P."/>
        </authorList>
    </citation>
    <scope>NUCLEOTIDE SEQUENCE [LARGE SCALE GENOMIC DNA]</scope>
    <source>
        <strain>SN15 / ATCC MYA-4574 / FGSC 10173</strain>
    </source>
</reference>
<keyword id="KW-0072">Autophagy</keyword>
<keyword id="KW-0963">Cytoplasm</keyword>
<keyword id="KW-0378">Hydrolase</keyword>
<keyword id="KW-0539">Nucleus</keyword>
<keyword id="KW-0645">Protease</keyword>
<keyword id="KW-0653">Protein transport</keyword>
<keyword id="KW-0788">Thiol protease</keyword>
<keyword id="KW-0813">Transport</keyword>
<sequence>MNDFERFGRNVVRTFYDPPPCNESNEPIWLLGQRYDSRPPLPKPAPSDSSTTATATAQAERNEDESWIRTSIDDKERKEAPNGEDPTQYGNWPSAFLDDFESRVWMTYRSGFSPIQKSQDPKATSAMSFRVRMQNLASPGFTSDAGFGCMIRSGQCILANALQILRLGRDWRWQENHADKDHAEILSLFADDPQAPFSIHRFVEHGAAVCGKYPGEWFGPSAAARCIQDLANKHREAGLKVYVSGDGADVYEDKLKQVAVDEDGLWQPTLILVGTRLGIDKITPVYWEALKASLQIPQSIGIAGGRPSASHYFVGVQGNNFYYLDPHSTRPLLPFHPPSLAAATSDTPNLTASTTSVSSTTSSTTIVPPADSIPAPSDPRQSLYPPSDLSTCHTRRIRRLQIREMDPSMLLAFLVTSEADYQDWKEGVQGVQGKSVVHVQDKEPPPRGQEREGAIDEVESWDEDGLQ</sequence>
<comment type="function">
    <text evidence="1">Cysteine protease that plays a key role in cytoplasm to vacuole transport (Cvt) and autophagy by mediating both proteolytic activation and delipidation of ATG8. Required for selective autophagic degradation of the nucleus (nucleophagy) as well as for mitophagy which contributes to regulate mitochondrial quantity and quality by eliminating the mitochondria to a basal level to fulfill cellular energy requirements and preventing excess ROS production. The protease activity is required for proteolytic activation of ATG8: cleaves the C-terminal amino acid of ATG8 to reveal a C-terminal glycine. ATG8 ubiquitin-like activity requires the exposure of the glycine at the C-terminus for its conjugation to phosphatidylethanolamine (PE) and its insertion to membranes, which is necessary for autophagy. The ATG8-PE conjugate mediates tethering between adjacent membranes and stimulates membrane hemifusion, leading to expansion of the autophagosomal membrane during autophagy. In addition to the protease activity, also catalyzes deconjugation of PE-conjugated forms of ATG8 during macroautophagy: ATG8 delipidation is required to release the protein from membranes, which facilitates multiple events during macroautophagy, and especially for efficient autophagosome biogenesis, the assembly of ATG9-containing tubulovesicular clusters into phagophores/autophagosomes, and for the disassembly of PAS-associated ATG components. ATG8 delipidation by ATG4 also recycles ATG8-PE generated on inappropriate membranes to maintain a reservoir of unlipidated ATG8 that is required for autophagosome formation at the PAS.</text>
</comment>
<comment type="catalytic activity">
    <reaction evidence="1">
        <text>[protein]-C-terminal L-amino acid-glycyl-phosphatidylethanolamide + H2O = [protein]-C-terminal L-amino acid-glycine + a 1,2-diacyl-sn-glycero-3-phosphoethanolamine</text>
        <dbReference type="Rhea" id="RHEA:67548"/>
        <dbReference type="Rhea" id="RHEA-COMP:17323"/>
        <dbReference type="Rhea" id="RHEA-COMP:17324"/>
        <dbReference type="ChEBI" id="CHEBI:15377"/>
        <dbReference type="ChEBI" id="CHEBI:64612"/>
        <dbReference type="ChEBI" id="CHEBI:172940"/>
        <dbReference type="ChEBI" id="CHEBI:172941"/>
    </reaction>
    <physiologicalReaction direction="left-to-right" evidence="1">
        <dbReference type="Rhea" id="RHEA:67549"/>
    </physiologicalReaction>
</comment>
<comment type="subcellular location">
    <subcellularLocation>
        <location evidence="1">Cytoplasm</location>
    </subcellularLocation>
    <subcellularLocation>
        <location evidence="1">Nucleus</location>
    </subcellularLocation>
    <subcellularLocation>
        <location evidence="1">Preautophagosomal structure</location>
    </subcellularLocation>
</comment>
<comment type="similarity">
    <text evidence="4">Belongs to the peptidase C54 family.</text>
</comment>
<comment type="sequence caution" evidence="4">
    <conflict type="erroneous gene model prediction">
        <sequence resource="EMBL-CDS" id="EAT78153"/>
    </conflict>
</comment>
<protein>
    <recommendedName>
        <fullName>Probable cysteine protease ATG4</fullName>
        <ecNumber>3.4.22.-</ecNumber>
    </recommendedName>
    <alternativeName>
        <fullName>Autophagy-related protein 4</fullName>
    </alternativeName>
</protein>
<name>ATG4_PHANO</name>
<accession>Q0U199</accession>
<evidence type="ECO:0000250" key="1">
    <source>
        <dbReference type="UniProtKB" id="P53867"/>
    </source>
</evidence>
<evidence type="ECO:0000250" key="2">
    <source>
        <dbReference type="UniProtKB" id="Q9Y4P1"/>
    </source>
</evidence>
<evidence type="ECO:0000256" key="3">
    <source>
        <dbReference type="SAM" id="MobiDB-lite"/>
    </source>
</evidence>
<evidence type="ECO:0000305" key="4"/>
<feature type="chain" id="PRO_0000317841" description="Probable cysteine protease ATG4">
    <location>
        <begin position="1"/>
        <end position="467"/>
    </location>
</feature>
<feature type="region of interest" description="Disordered" evidence="3">
    <location>
        <begin position="32"/>
        <end position="93"/>
    </location>
</feature>
<feature type="region of interest" description="Disordered" evidence="3">
    <location>
        <begin position="343"/>
        <end position="390"/>
    </location>
</feature>
<feature type="region of interest" description="Disordered" evidence="3">
    <location>
        <begin position="429"/>
        <end position="467"/>
    </location>
</feature>
<feature type="compositionally biased region" description="Basic and acidic residues" evidence="3">
    <location>
        <begin position="60"/>
        <end position="81"/>
    </location>
</feature>
<feature type="compositionally biased region" description="Polar residues" evidence="3">
    <location>
        <begin position="343"/>
        <end position="352"/>
    </location>
</feature>
<feature type="compositionally biased region" description="Low complexity" evidence="3">
    <location>
        <begin position="353"/>
        <end position="379"/>
    </location>
</feature>
<feature type="compositionally biased region" description="Basic and acidic residues" evidence="3">
    <location>
        <begin position="439"/>
        <end position="454"/>
    </location>
</feature>
<feature type="compositionally biased region" description="Acidic residues" evidence="3">
    <location>
        <begin position="455"/>
        <end position="467"/>
    </location>
</feature>
<feature type="active site" description="Nucleophile" evidence="2">
    <location>
        <position position="149"/>
    </location>
</feature>
<feature type="active site" evidence="2">
    <location>
        <position position="325"/>
    </location>
</feature>
<feature type="active site" evidence="2">
    <location>
        <position position="327"/>
    </location>
</feature>